<gene>
    <name evidence="3" type="primary">CSP</name>
</gene>
<comment type="function">
    <text evidence="1 3">Essential sporozoite protein (By similarity). In the mosquito vector, required for sporozoite development in the oocyst, migration through the vector hemolymph and entry into the vector salivary glands (By similarity). In the vertebrate host, required for sporozoite migration through the host dermis and infection of host hepatocytes (By similarity). Binds to highly sulfated heparan sulfate proteoglycans (HSPGs) on the surface of host hepatocytes (By similarity).</text>
</comment>
<comment type="function">
    <molecule>Circumsporozoite protein C-terminus</molecule>
    <text evidence="3">In the vertebrate host, binds to highly sulfated heparan sulfate proteoglycans (HSPGs) on the surface of host hepatocytes and is required for sporozoite invasion of the host hepatocytes.</text>
</comment>
<comment type="subcellular location">
    <subcellularLocation>
        <location evidence="2">Cell membrane</location>
        <topology evidence="5">Lipid-anchor</topology>
        <topology evidence="5">GPI-anchor</topology>
    </subcellularLocation>
    <subcellularLocation>
        <location evidence="3">Cytoplasm</location>
    </subcellularLocation>
    <text evidence="3">Localizes to the cytoplasm and the cell membrane in oocysts at day 6 post infection and then gradually distributes over the entire cell surface of the sporoblast and the budding sporozoites.</text>
</comment>
<comment type="domain">
    <text evidence="3 4">The N-terminus is involved in the initial binding to heparan sulfate proteoglycans (HSPGs) on the surface of host hepatocytes (By similarity). The N-terminus masks the TSP type-1 (TSR) domain which maintains the sporozoites in a migratory state, enabling them to complete their journey to the salivary gland in the mosquito vector and then to the host liver. The unmasking of the TSP type-1 (TSR) domain when the sporozoite interacts with the host hepatocyte also protects sporozoites from host antibodies (By similarity).</text>
</comment>
<comment type="domain">
    <text evidence="3">The TSP type-1 (TSR) domain is required for sporozoite development and invasion. CSP has two conformational states, an adhesive conformation in which the TSP type-1 (TSR) domain is exposed and a nonadhesive conformation in which the TSR is masked by the N-terminus. TSR-exposed conformation occurs during sporozoite development in the oocyst in the mosquito vector and during host hepatocyte invasion. TSR-masked conformation occurs during sporozoite migration through the hemolymph to salivary glands in the mosquito vector and in the host dermis.</text>
</comment>
<comment type="domain">
    <text evidence="3">The GPI-anchor is essential for cell membrane localization and for sporozoite formation inside the oocyst.</text>
</comment>
<comment type="PTM">
    <text evidence="1 3">During host cell invasion, proteolytically cleaved at the cell membrane in the region I by a papain-like cysteine protease of parasite origin (By similarity). Cleavage is triggered by the sporozoite contact with highly sulfated heparan sulfate proteoglycans (HSPGs) present on the host hepatocyte cell surface (By similarity). Cleavage exposes the TSP type-1 (TSR) domain and is required for productive invasion of host hepatocytes but not for adhesion to the host cell membrane (By similarity). Cleavage is dispensable for sporozoite development in the oocyst, motility and for traversal of host and vector cells (By similarity).</text>
</comment>
<comment type="PTM">
    <text evidence="2">O-glycosylated; maybe by POFUT2.</text>
</comment>
<comment type="polymorphism">
    <text evidence="8">The sequence of the repeats varies across Plasmodium species and strains.</text>
</comment>
<comment type="similarity">
    <text evidence="10">Belongs to the plasmodium circumsporozoite protein family.</text>
</comment>
<reference key="1">
    <citation type="journal article" date="1987" name="Cell">
        <title>The circumsporozoite gene of the Plasmodium cynomolgi complex.</title>
        <authorList>
            <person name="Galinski M.R."/>
            <person name="Arnot D.E."/>
            <person name="Cochrane A.H."/>
            <person name="Barnwell J.W."/>
            <person name="Nussenzweig R.S."/>
            <person name="Enea V."/>
        </authorList>
    </citation>
    <scope>NUCLEOTIDE SEQUENCE [GENOMIC DNA]</scope>
    <scope>POLYMORPHISM</scope>
    <scope>REPEATS</scope>
</reference>
<feature type="signal peptide" evidence="5">
    <location>
        <begin position="1"/>
        <end position="23"/>
    </location>
</feature>
<feature type="chain" id="PRO_0000024525" description="Circumsporozoite protein" evidence="5">
    <location>
        <begin position="24"/>
        <end position="396"/>
    </location>
</feature>
<feature type="chain" id="PRO_0000455483" description="Circumsporozoite protein C-terminus" evidence="3">
    <location>
        <begin status="unknown"/>
        <end position="396"/>
    </location>
</feature>
<feature type="propeptide" id="PRO_0000455484" description="Removed in mature form" evidence="5">
    <location>
        <begin position="397"/>
        <end position="419"/>
    </location>
</feature>
<feature type="repeat" description="1" evidence="11">
    <location>
        <begin position="99"/>
        <end position="102"/>
    </location>
</feature>
<feature type="repeat" description="2" evidence="11">
    <location>
        <begin position="103"/>
        <end position="106"/>
    </location>
</feature>
<feature type="repeat" description="3" evidence="11">
    <location>
        <begin position="107"/>
        <end position="110"/>
    </location>
</feature>
<feature type="repeat" description="4" evidence="11">
    <location>
        <begin position="111"/>
        <end position="114"/>
    </location>
</feature>
<feature type="repeat" description="5" evidence="11">
    <location>
        <begin position="115"/>
        <end position="118"/>
    </location>
</feature>
<feature type="repeat" description="6" evidence="11">
    <location>
        <begin position="119"/>
        <end position="122"/>
    </location>
</feature>
<feature type="repeat" description="7" evidence="11">
    <location>
        <begin position="123"/>
        <end position="126"/>
    </location>
</feature>
<feature type="repeat" description="8" evidence="11">
    <location>
        <begin position="127"/>
        <end position="130"/>
    </location>
</feature>
<feature type="repeat" description="9" evidence="11">
    <location>
        <begin position="131"/>
        <end position="134"/>
    </location>
</feature>
<feature type="repeat" description="10" evidence="11">
    <location>
        <begin position="135"/>
        <end position="138"/>
    </location>
</feature>
<feature type="repeat" description="11" evidence="11">
    <location>
        <begin position="139"/>
        <end position="142"/>
    </location>
</feature>
<feature type="repeat" description="12" evidence="11">
    <location>
        <begin position="143"/>
        <end position="146"/>
    </location>
</feature>
<feature type="repeat" description="13" evidence="11">
    <location>
        <begin position="147"/>
        <end position="150"/>
    </location>
</feature>
<feature type="repeat" description="14" evidence="11">
    <location>
        <begin position="151"/>
        <end position="154"/>
    </location>
</feature>
<feature type="repeat" description="15" evidence="11">
    <location>
        <begin position="155"/>
        <end position="158"/>
    </location>
</feature>
<feature type="repeat" description="16" evidence="11">
    <location>
        <begin position="159"/>
        <end position="162"/>
    </location>
</feature>
<feature type="repeat" description="17" evidence="11">
    <location>
        <begin position="163"/>
        <end position="166"/>
    </location>
</feature>
<feature type="repeat" description="18" evidence="11">
    <location>
        <begin position="167"/>
        <end position="170"/>
    </location>
</feature>
<feature type="repeat" description="19" evidence="11">
    <location>
        <begin position="171"/>
        <end position="174"/>
    </location>
</feature>
<feature type="repeat" description="20" evidence="11">
    <location>
        <begin position="175"/>
        <end position="178"/>
    </location>
</feature>
<feature type="repeat" description="21" evidence="11">
    <location>
        <begin position="179"/>
        <end position="182"/>
    </location>
</feature>
<feature type="repeat" description="22" evidence="11">
    <location>
        <begin position="183"/>
        <end position="186"/>
    </location>
</feature>
<feature type="repeat" description="23" evidence="11">
    <location>
        <begin position="187"/>
        <end position="190"/>
    </location>
</feature>
<feature type="repeat" description="24" evidence="11">
    <location>
        <begin position="191"/>
        <end position="194"/>
    </location>
</feature>
<feature type="repeat" description="25" evidence="11">
    <location>
        <begin position="195"/>
        <end position="198"/>
    </location>
</feature>
<feature type="repeat" description="26" evidence="11">
    <location>
        <begin position="199"/>
        <end position="202"/>
    </location>
</feature>
<feature type="repeat" description="27" evidence="11">
    <location>
        <begin position="203"/>
        <end position="206"/>
    </location>
</feature>
<feature type="repeat" description="28" evidence="11">
    <location>
        <begin position="207"/>
        <end position="210"/>
    </location>
</feature>
<feature type="repeat" description="29" evidence="11">
    <location>
        <begin position="211"/>
        <end position="214"/>
    </location>
</feature>
<feature type="repeat" description="30" evidence="11">
    <location>
        <begin position="215"/>
        <end position="218"/>
    </location>
</feature>
<feature type="repeat" description="31" evidence="11">
    <location>
        <begin position="219"/>
        <end position="222"/>
    </location>
</feature>
<feature type="repeat" description="32" evidence="11">
    <location>
        <begin position="223"/>
        <end position="226"/>
    </location>
</feature>
<feature type="repeat" description="33" evidence="11">
    <location>
        <begin position="227"/>
        <end position="230"/>
    </location>
</feature>
<feature type="repeat" description="34" evidence="11">
    <location>
        <begin position="231"/>
        <end position="234"/>
    </location>
</feature>
<feature type="repeat" description="35" evidence="11">
    <location>
        <begin position="235"/>
        <end position="238"/>
    </location>
</feature>
<feature type="repeat" description="36" evidence="11">
    <location>
        <begin position="239"/>
        <end position="242"/>
    </location>
</feature>
<feature type="repeat" description="37" evidence="11">
    <location>
        <begin position="243"/>
        <end position="246"/>
    </location>
</feature>
<feature type="repeat" description="38" evidence="11">
    <location>
        <begin position="247"/>
        <end position="250"/>
    </location>
</feature>
<feature type="repeat" description="39; approximate" evidence="11">
    <location>
        <begin position="251"/>
        <end position="254"/>
    </location>
</feature>
<feature type="repeat" description="40" evidence="11">
    <location>
        <begin position="255"/>
        <end position="258"/>
    </location>
</feature>
<feature type="repeat" description="41" evidence="11">
    <location>
        <begin position="259"/>
        <end position="262"/>
    </location>
</feature>
<feature type="repeat" description="42" evidence="11">
    <location>
        <begin position="263"/>
        <end position="266"/>
    </location>
</feature>
<feature type="repeat" description="43" evidence="11">
    <location>
        <begin position="267"/>
        <end position="270"/>
    </location>
</feature>
<feature type="repeat" description="44" evidence="11">
    <location>
        <begin position="271"/>
        <end position="274"/>
    </location>
</feature>
<feature type="repeat" description="45" evidence="11">
    <location>
        <begin position="275"/>
        <end position="278"/>
    </location>
</feature>
<feature type="repeat" description="46" evidence="11">
    <location>
        <begin position="279"/>
        <end position="282"/>
    </location>
</feature>
<feature type="repeat" description="47" evidence="11">
    <location>
        <begin position="283"/>
        <end position="286"/>
    </location>
</feature>
<feature type="repeat" description="48" evidence="11">
    <location>
        <begin position="287"/>
        <end position="290"/>
    </location>
</feature>
<feature type="repeat" description="49" evidence="11">
    <location>
        <begin position="291"/>
        <end position="294"/>
    </location>
</feature>
<feature type="repeat" description="50" evidence="11">
    <location>
        <begin position="295"/>
        <end position="298"/>
    </location>
</feature>
<feature type="repeat" description="51" evidence="11">
    <location>
        <begin position="299"/>
        <end position="302"/>
    </location>
</feature>
<feature type="repeat" description="52" evidence="11">
    <location>
        <begin position="303"/>
        <end position="306"/>
    </location>
</feature>
<feature type="repeat" description="53; approximate" evidence="11">
    <location>
        <begin position="307"/>
        <end position="310"/>
    </location>
</feature>
<feature type="repeat" description="54; approximate" evidence="11">
    <location>
        <begin position="311"/>
        <end position="314"/>
    </location>
</feature>
<feature type="domain" description="TSP type-1" evidence="6">
    <location>
        <begin position="345"/>
        <end position="397"/>
    </location>
</feature>
<feature type="region of interest" description="Disordered" evidence="7">
    <location>
        <begin position="50"/>
        <end position="111"/>
    </location>
</feature>
<feature type="region of interest" description="Required for the binding to heparan sulfate proteoglycans (HSPGs) on the surface of host hepatocytes" evidence="4">
    <location>
        <begin position="81"/>
        <end position="89"/>
    </location>
</feature>
<feature type="region of interest" description="Region I; contains the proteolytic cleavage site" evidence="3">
    <location>
        <begin position="92"/>
        <end position="96"/>
    </location>
</feature>
<feature type="region of interest" description="54 X 4 AA approximate tandem repeats of N-A-G-G" evidence="11">
    <location>
        <begin position="99"/>
        <end position="314"/>
    </location>
</feature>
<feature type="region of interest" description="Disordered" evidence="7">
    <location>
        <begin position="146"/>
        <end position="237"/>
    </location>
</feature>
<feature type="region of interest" description="Disordered" evidence="7">
    <location>
        <begin position="312"/>
        <end position="332"/>
    </location>
</feature>
<feature type="compositionally biased region" description="Basic and acidic residues" evidence="7">
    <location>
        <begin position="65"/>
        <end position="95"/>
    </location>
</feature>
<feature type="lipid moiety-binding region" description="GPI-anchor amidated cysteine" evidence="5">
    <location>
        <position position="396"/>
    </location>
</feature>
<feature type="glycosylation site" description="O-linked (Fuc) threonine" evidence="2">
    <location>
        <position position="360"/>
    </location>
</feature>
<feature type="disulfide bond" evidence="4">
    <location>
        <begin position="357"/>
        <end position="391"/>
    </location>
</feature>
<feature type="disulfide bond" evidence="4">
    <location>
        <begin position="361"/>
        <end position="396"/>
    </location>
</feature>
<keyword id="KW-1003">Cell membrane</keyword>
<keyword id="KW-0963">Cytoplasm</keyword>
<keyword id="KW-1015">Disulfide bond</keyword>
<keyword id="KW-0325">Glycoprotein</keyword>
<keyword id="KW-0336">GPI-anchor</keyword>
<keyword id="KW-0449">Lipoprotein</keyword>
<keyword id="KW-0461">Malaria</keyword>
<keyword id="KW-0472">Membrane</keyword>
<keyword id="KW-0677">Repeat</keyword>
<keyword id="KW-0732">Signal</keyword>
<keyword id="KW-0748">Sporozoite</keyword>
<dbReference type="EMBL" id="M15102">
    <property type="protein sequence ID" value="AAA29539.1"/>
    <property type="molecule type" value="Genomic_DNA"/>
</dbReference>
<dbReference type="PIR" id="B26255">
    <property type="entry name" value="OZZQAM"/>
</dbReference>
<dbReference type="SMR" id="P08676"/>
<dbReference type="GlyCosmos" id="P08676">
    <property type="glycosylation" value="1 site, No reported glycans"/>
</dbReference>
<dbReference type="GO" id="GO:0009986">
    <property type="term" value="C:cell surface"/>
    <property type="evidence" value="ECO:0007669"/>
    <property type="project" value="InterPro"/>
</dbReference>
<dbReference type="GO" id="GO:0005737">
    <property type="term" value="C:cytoplasm"/>
    <property type="evidence" value="ECO:0007669"/>
    <property type="project" value="UniProtKB-SubCell"/>
</dbReference>
<dbReference type="GO" id="GO:0005886">
    <property type="term" value="C:plasma membrane"/>
    <property type="evidence" value="ECO:0007669"/>
    <property type="project" value="UniProtKB-SubCell"/>
</dbReference>
<dbReference type="GO" id="GO:0098552">
    <property type="term" value="C:side of membrane"/>
    <property type="evidence" value="ECO:0007669"/>
    <property type="project" value="UniProtKB-KW"/>
</dbReference>
<dbReference type="Gene3D" id="2.20.100.10">
    <property type="entry name" value="Thrombospondin type-1 (TSP1) repeat"/>
    <property type="match status" value="1"/>
</dbReference>
<dbReference type="InterPro" id="IPR003067">
    <property type="entry name" value="Crcmsprzoite"/>
</dbReference>
<dbReference type="InterPro" id="IPR000884">
    <property type="entry name" value="TSP1_rpt"/>
</dbReference>
<dbReference type="InterPro" id="IPR036383">
    <property type="entry name" value="TSP1_rpt_sf"/>
</dbReference>
<dbReference type="Pfam" id="PF00090">
    <property type="entry name" value="TSP_1"/>
    <property type="match status" value="1"/>
</dbReference>
<dbReference type="PRINTS" id="PR01303">
    <property type="entry name" value="CRCMSPRZOITE"/>
</dbReference>
<dbReference type="SMART" id="SM00209">
    <property type="entry name" value="TSP1"/>
    <property type="match status" value="1"/>
</dbReference>
<dbReference type="SUPFAM" id="SSF82895">
    <property type="entry name" value="TSP-1 type 1 repeat"/>
    <property type="match status" value="1"/>
</dbReference>
<dbReference type="PROSITE" id="PS50092">
    <property type="entry name" value="TSP1"/>
    <property type="match status" value="1"/>
</dbReference>
<name>CSP_PLACM</name>
<proteinExistence type="inferred from homology"/>
<evidence type="ECO:0000250" key="1">
    <source>
        <dbReference type="UniProtKB" id="P02893"/>
    </source>
</evidence>
<evidence type="ECO:0000250" key="2">
    <source>
        <dbReference type="UniProtKB" id="P19597"/>
    </source>
</evidence>
<evidence type="ECO:0000250" key="3">
    <source>
        <dbReference type="UniProtKB" id="P23093"/>
    </source>
</evidence>
<evidence type="ECO:0000250" key="4">
    <source>
        <dbReference type="UniProtKB" id="Q7K740"/>
    </source>
</evidence>
<evidence type="ECO:0000255" key="5"/>
<evidence type="ECO:0000255" key="6">
    <source>
        <dbReference type="PROSITE-ProRule" id="PRU00210"/>
    </source>
</evidence>
<evidence type="ECO:0000256" key="7">
    <source>
        <dbReference type="SAM" id="MobiDB-lite"/>
    </source>
</evidence>
<evidence type="ECO:0000269" key="8">
    <source>
    </source>
</evidence>
<evidence type="ECO:0000303" key="9">
    <source>
    </source>
</evidence>
<evidence type="ECO:0000305" key="10"/>
<evidence type="ECO:0000305" key="11">
    <source>
    </source>
</evidence>
<sequence length="419" mass="38982">MKNFNLLAVSSILLVDLFRTHWGHNVDFSKAINLNGVSFSNVDASSLGAAQVRQSASRGRGLGENPKEEDGADKKKKKDEKQVEPKKPRENKLKQPVENADGNAGGNAGGNAGGNAGGNAGGNADGNAGGNAGGNAGGNAGGNAGGNADGNAGGNADGNAGGNADGNAGGNAGGNAGGNADGNAGGNAGGNAGGNAGGNAGGNAGGNAGGNADGNAGGNAGGNAGGNADGNAGGNAGGNAGGNAGGNAGGTAGGNADGNAGGNAGGNAGGNAGGNAGGNAGGNAGGNAGGNAGGNAGGNAGGNAGGNAGANAGNKKAGDAGAGQGQNNEAANMPNVKLVKEYLDKIRSTISTEWSPCSVTCGKGVRMRKKVSAANKKPEELDVNDLETEVCTMDKCAGIFNVVSNSLRLVILLVLALFN</sequence>
<accession>P08676</accession>
<protein>
    <recommendedName>
        <fullName evidence="9">Circumsporozoite protein</fullName>
        <shortName evidence="9">CS</shortName>
    </recommendedName>
    <component>
        <recommendedName>
            <fullName evidence="10">Circumsporozoite protein C-terminus</fullName>
        </recommendedName>
    </component>
</protein>
<organism>
    <name type="scientific">Plasmodium cynomolgi (strain Mulligan/NIH)</name>
    <dbReference type="NCBI Taxonomy" id="5832"/>
    <lineage>
        <taxon>Eukaryota</taxon>
        <taxon>Sar</taxon>
        <taxon>Alveolata</taxon>
        <taxon>Apicomplexa</taxon>
        <taxon>Aconoidasida</taxon>
        <taxon>Haemosporida</taxon>
        <taxon>Plasmodiidae</taxon>
        <taxon>Plasmodium</taxon>
        <taxon>Plasmodium (Plasmodium)</taxon>
    </lineage>
</organism>